<accession>P42669</accession>
<organism>
    <name type="scientific">Mus musculus</name>
    <name type="common">Mouse</name>
    <dbReference type="NCBI Taxonomy" id="10090"/>
    <lineage>
        <taxon>Eukaryota</taxon>
        <taxon>Metazoa</taxon>
        <taxon>Chordata</taxon>
        <taxon>Craniata</taxon>
        <taxon>Vertebrata</taxon>
        <taxon>Euteleostomi</taxon>
        <taxon>Mammalia</taxon>
        <taxon>Eutheria</taxon>
        <taxon>Euarchontoglires</taxon>
        <taxon>Glires</taxon>
        <taxon>Rodentia</taxon>
        <taxon>Myomorpha</taxon>
        <taxon>Muroidea</taxon>
        <taxon>Muridae</taxon>
        <taxon>Murinae</taxon>
        <taxon>Mus</taxon>
        <taxon>Mus</taxon>
    </lineage>
</organism>
<gene>
    <name type="primary">Pura</name>
</gene>
<comment type="function">
    <text>This is a probable transcription activator that specifically binds the purine-rich single strand of the PUR element located upstream of the c-Myc gene. May play a role in the initiation of DNA replication and in recombination.</text>
</comment>
<comment type="subunit">
    <text evidence="3 4">Homodimer, heterodimer with PURB and heterotrimer with PURB and YBX1/Y-box protein 1 (PubMed:10318844). Interacts with FMR1; this interaction occurs in association with polyribosome (PubMed:12147688).</text>
</comment>
<comment type="subcellular location">
    <subcellularLocation>
        <location>Nucleus</location>
    </subcellularLocation>
</comment>
<comment type="similarity">
    <text evidence="5">Belongs to the PUR DNA-binding protein family.</text>
</comment>
<proteinExistence type="evidence at protein level"/>
<feature type="initiator methionine" description="Removed" evidence="6">
    <location>
        <position position="1"/>
    </location>
</feature>
<feature type="chain" id="PRO_0000097108" description="Transcriptional activator protein Pur-alpha">
    <location>
        <begin position="2"/>
        <end position="321"/>
    </location>
</feature>
<feature type="region of interest" description="Disordered" evidence="2">
    <location>
        <begin position="1"/>
        <end position="54"/>
    </location>
</feature>
<feature type="region of interest" description="Disordered" evidence="2">
    <location>
        <begin position="294"/>
        <end position="321"/>
    </location>
</feature>
<feature type="compositionally biased region" description="Gly residues" evidence="2">
    <location>
        <begin position="9"/>
        <end position="51"/>
    </location>
</feature>
<feature type="compositionally biased region" description="Low complexity" evidence="2">
    <location>
        <begin position="294"/>
        <end position="313"/>
    </location>
</feature>
<feature type="modified residue" description="N-acetylalanine" evidence="6">
    <location>
        <position position="2"/>
    </location>
</feature>
<feature type="modified residue" description="Phosphoserine" evidence="1">
    <location>
        <position position="181"/>
    </location>
</feature>
<reference key="1">
    <citation type="journal article" date="1994" name="Gene">
        <title>Conservation in human and mouse Pur alpha of a motif common to several proteins involved in initiation of DNA replication.</title>
        <authorList>
            <person name="Ma Z.-W."/>
            <person name="Bergemann A.D."/>
            <person name="Johnson E.M."/>
        </authorList>
    </citation>
    <scope>NUCLEOTIDE SEQUENCE [MRNA]</scope>
</reference>
<reference key="2">
    <citation type="journal article" date="1997" name="J. Biol. Chem.">
        <title>Sequence of cDNAs encoding components of vascular actin single-stranded DNA-binding factor 2 establish identity to Puralpha and Purbeta.</title>
        <authorList>
            <person name="Kelm R.J. Jr."/>
            <person name="Elder P.K."/>
            <person name="Strauch A.R."/>
            <person name="Getz M.J."/>
        </authorList>
    </citation>
    <scope>NUCLEOTIDE SEQUENCE [MRNA]</scope>
    <source>
        <strain>C57BL/6 X CBA</strain>
        <tissue>Lung</tissue>
    </source>
</reference>
<reference key="3">
    <citation type="submission" date="2009-01" db="UniProtKB">
        <authorList>
            <person name="Lubec G."/>
            <person name="Sunyer B."/>
            <person name="Chen W.-Q."/>
        </authorList>
    </citation>
    <scope>PROTEIN SEQUENCE OF 176-198 AND 204-228</scope>
    <scope>IDENTIFICATION BY MASS SPECTROMETRY</scope>
    <source>
        <strain>OF1</strain>
        <tissue>Hippocampus</tissue>
    </source>
</reference>
<reference key="4">
    <citation type="journal article" date="1999" name="J. Biol. Chem.">
        <title>Molecular interactions between single-stranded DNA-binding proteins associated with an essential MCAT element in the mouse smooth muscle alpha-actin promoter.</title>
        <authorList>
            <person name="Kelm R.J. Jr."/>
            <person name="Cogan J.G."/>
            <person name="Elder P.K."/>
            <person name="Strauch A.R."/>
            <person name="Getz M.J."/>
        </authorList>
    </citation>
    <scope>SUBUNIT</scope>
</reference>
<reference key="5">
    <citation type="journal article" date="2002" name="J. Biol. Chem.">
        <title>Identification of mRNA/protein (mRNP) complexes containing Puralpha, mStaufen, fragile X protein, and myosin Va and their association with rough endoplasmic reticulum equipped with a kinesin motor.</title>
        <authorList>
            <person name="Ohashi S."/>
            <person name="Koike K."/>
            <person name="Omori A."/>
            <person name="Ichinose S."/>
            <person name="Ohara S."/>
            <person name="Kobayashi S."/>
            <person name="Sato T.A."/>
            <person name="Anzai K."/>
        </authorList>
    </citation>
    <scope>INTERACTION WITH FMR1</scope>
</reference>
<reference key="6">
    <citation type="journal article" date="2007" name="Proc. Natl. Acad. Sci. U.S.A.">
        <title>Large-scale phosphorylation analysis of mouse liver.</title>
        <authorList>
            <person name="Villen J."/>
            <person name="Beausoleil S.A."/>
            <person name="Gerber S.A."/>
            <person name="Gygi S.P."/>
        </authorList>
    </citation>
    <scope>ACETYLATION [LARGE SCALE ANALYSIS] AT ALA-2</scope>
    <scope>CLEAVAGE OF INITIATOR METHIONINE [LARGE SCALE ANALYSIS]</scope>
    <scope>IDENTIFICATION BY MASS SPECTROMETRY [LARGE SCALE ANALYSIS]</scope>
    <source>
        <tissue>Liver</tissue>
    </source>
</reference>
<reference key="7">
    <citation type="journal article" date="2010" name="Cell">
        <title>A tissue-specific atlas of mouse protein phosphorylation and expression.</title>
        <authorList>
            <person name="Huttlin E.L."/>
            <person name="Jedrychowski M.P."/>
            <person name="Elias J.E."/>
            <person name="Goswami T."/>
            <person name="Rad R."/>
            <person name="Beausoleil S.A."/>
            <person name="Villen J."/>
            <person name="Haas W."/>
            <person name="Sowa M.E."/>
            <person name="Gygi S.P."/>
        </authorList>
    </citation>
    <scope>IDENTIFICATION BY MASS SPECTROMETRY [LARGE SCALE ANALYSIS]</scope>
    <source>
        <tissue>Brain</tissue>
        <tissue>Brown adipose tissue</tissue>
        <tissue>Heart</tissue>
        <tissue>Kidney</tissue>
        <tissue>Liver</tissue>
        <tissue>Lung</tissue>
        <tissue>Pancreas</tissue>
        <tissue>Spleen</tissue>
        <tissue>Testis</tissue>
    </source>
</reference>
<name>PURA_MOUSE</name>
<evidence type="ECO:0000250" key="1">
    <source>
        <dbReference type="UniProtKB" id="Q00577"/>
    </source>
</evidence>
<evidence type="ECO:0000256" key="2">
    <source>
        <dbReference type="SAM" id="MobiDB-lite"/>
    </source>
</evidence>
<evidence type="ECO:0000269" key="3">
    <source>
    </source>
</evidence>
<evidence type="ECO:0000269" key="4">
    <source>
    </source>
</evidence>
<evidence type="ECO:0000305" key="5"/>
<evidence type="ECO:0007744" key="6">
    <source>
    </source>
</evidence>
<dbReference type="EMBL" id="U02098">
    <property type="protein sequence ID" value="AAA64630.1"/>
    <property type="molecule type" value="mRNA"/>
</dbReference>
<dbReference type="EMBL" id="AF017631">
    <property type="protein sequence ID" value="AAB71860.1"/>
    <property type="molecule type" value="mRNA"/>
</dbReference>
<dbReference type="CCDS" id="CCDS29151.1"/>
<dbReference type="RefSeq" id="NP_033015.1">
    <property type="nucleotide sequence ID" value="NM_008989.4"/>
</dbReference>
<dbReference type="RefSeq" id="XP_006525787.1">
    <property type="nucleotide sequence ID" value="XM_006525724.5"/>
</dbReference>
<dbReference type="RefSeq" id="XP_011245162.1">
    <property type="nucleotide sequence ID" value="XM_011246860.4"/>
</dbReference>
<dbReference type="SMR" id="P42669"/>
<dbReference type="BioGRID" id="202515">
    <property type="interactions" value="38"/>
</dbReference>
<dbReference type="CORUM" id="P42669"/>
<dbReference type="FunCoup" id="P42669">
    <property type="interactions" value="2377"/>
</dbReference>
<dbReference type="IntAct" id="P42669">
    <property type="interactions" value="12"/>
</dbReference>
<dbReference type="STRING" id="10090.ENSMUSP00000059404"/>
<dbReference type="GlyGen" id="P42669">
    <property type="glycosylation" value="4 sites, 1 O-linked glycan (4 sites)"/>
</dbReference>
<dbReference type="iPTMnet" id="P42669"/>
<dbReference type="PhosphoSitePlus" id="P42669"/>
<dbReference type="SwissPalm" id="P42669"/>
<dbReference type="jPOST" id="P42669"/>
<dbReference type="PaxDb" id="10090-ENSMUSP00000059404"/>
<dbReference type="PeptideAtlas" id="P42669"/>
<dbReference type="ProteomicsDB" id="301890"/>
<dbReference type="Pumba" id="P42669"/>
<dbReference type="Antibodypedia" id="26834">
    <property type="antibodies" value="265 antibodies from 28 providers"/>
</dbReference>
<dbReference type="DNASU" id="19290"/>
<dbReference type="Ensembl" id="ENSMUST00000051301.6">
    <property type="protein sequence ID" value="ENSMUSP00000059404.4"/>
    <property type="gene ID" value="ENSMUSG00000043991.6"/>
</dbReference>
<dbReference type="GeneID" id="19290"/>
<dbReference type="KEGG" id="mmu:19290"/>
<dbReference type="UCSC" id="uc008enh.2">
    <property type="organism name" value="mouse"/>
</dbReference>
<dbReference type="AGR" id="MGI:103079"/>
<dbReference type="CTD" id="5813"/>
<dbReference type="MGI" id="MGI:103079">
    <property type="gene designation" value="Pura"/>
</dbReference>
<dbReference type="VEuPathDB" id="HostDB:ENSMUSG00000043991"/>
<dbReference type="eggNOG" id="KOG3074">
    <property type="taxonomic scope" value="Eukaryota"/>
</dbReference>
<dbReference type="GeneTree" id="ENSGT00950000183162"/>
<dbReference type="HOGENOM" id="CLU_057873_1_1_1"/>
<dbReference type="InParanoid" id="P42669"/>
<dbReference type="OMA" id="WAKFGST"/>
<dbReference type="OrthoDB" id="523901at2759"/>
<dbReference type="PhylomeDB" id="P42669"/>
<dbReference type="TreeFam" id="TF313701"/>
<dbReference type="BioGRID-ORCS" id="19290">
    <property type="hits" value="3 hits in 80 CRISPR screens"/>
</dbReference>
<dbReference type="CD-CODE" id="764D0258">
    <property type="entry name" value="Neuronal RNP granule"/>
</dbReference>
<dbReference type="CD-CODE" id="CE726F99">
    <property type="entry name" value="Postsynaptic density"/>
</dbReference>
<dbReference type="ChiTaRS" id="Pura">
    <property type="organism name" value="mouse"/>
</dbReference>
<dbReference type="PRO" id="PR:P42669"/>
<dbReference type="Proteomes" id="UP000000589">
    <property type="component" value="Chromosome 18"/>
</dbReference>
<dbReference type="RNAct" id="P42669">
    <property type="molecule type" value="protein"/>
</dbReference>
<dbReference type="Bgee" id="ENSMUSG00000043991">
    <property type="expression patterns" value="Expressed in ventral tegmental area and 253 other cell types or tissues"/>
</dbReference>
<dbReference type="GO" id="GO:0005737">
    <property type="term" value="C:cytoplasm"/>
    <property type="evidence" value="ECO:0000314"/>
    <property type="project" value="MGI"/>
</dbReference>
<dbReference type="GO" id="GO:0030425">
    <property type="term" value="C:dendrite"/>
    <property type="evidence" value="ECO:0000314"/>
    <property type="project" value="MGI"/>
</dbReference>
<dbReference type="GO" id="GO:0098978">
    <property type="term" value="C:glutamatergic synapse"/>
    <property type="evidence" value="ECO:0000314"/>
    <property type="project" value="SynGO"/>
</dbReference>
<dbReference type="GO" id="GO:0043025">
    <property type="term" value="C:neuronal cell body"/>
    <property type="evidence" value="ECO:0000314"/>
    <property type="project" value="MGI"/>
</dbReference>
<dbReference type="GO" id="GO:0005634">
    <property type="term" value="C:nucleus"/>
    <property type="evidence" value="ECO:0000314"/>
    <property type="project" value="HGNC-UCL"/>
</dbReference>
<dbReference type="GO" id="GO:0098794">
    <property type="term" value="C:postsynapse"/>
    <property type="evidence" value="ECO:0000314"/>
    <property type="project" value="SynGO"/>
</dbReference>
<dbReference type="GO" id="GO:0003677">
    <property type="term" value="F:DNA binding"/>
    <property type="evidence" value="ECO:0000314"/>
    <property type="project" value="MGI"/>
</dbReference>
<dbReference type="GO" id="GO:0003700">
    <property type="term" value="F:DNA-binding transcription factor activity"/>
    <property type="evidence" value="ECO:0000314"/>
    <property type="project" value="MGI"/>
</dbReference>
<dbReference type="GO" id="GO:0140297">
    <property type="term" value="F:DNA-binding transcription factor binding"/>
    <property type="evidence" value="ECO:0000353"/>
    <property type="project" value="UniProtKB"/>
</dbReference>
<dbReference type="GO" id="GO:0001227">
    <property type="term" value="F:DNA-binding transcription repressor activity, RNA polymerase II-specific"/>
    <property type="evidence" value="ECO:0000314"/>
    <property type="project" value="HGNC-UCL"/>
</dbReference>
<dbReference type="GO" id="GO:0003690">
    <property type="term" value="F:double-stranded DNA binding"/>
    <property type="evidence" value="ECO:0000314"/>
    <property type="project" value="MGI"/>
</dbReference>
<dbReference type="GO" id="GO:0003691">
    <property type="term" value="F:double-stranded telomeric DNA binding"/>
    <property type="evidence" value="ECO:0007669"/>
    <property type="project" value="Ensembl"/>
</dbReference>
<dbReference type="GO" id="GO:0000900">
    <property type="term" value="F:mRNA regulatory element binding translation repressor activity"/>
    <property type="evidence" value="ECO:0000314"/>
    <property type="project" value="HGNC-UCL"/>
</dbReference>
<dbReference type="GO" id="GO:0032422">
    <property type="term" value="F:purine-rich negative regulatory element binding"/>
    <property type="evidence" value="ECO:0000314"/>
    <property type="project" value="HGNC-UCL"/>
</dbReference>
<dbReference type="GO" id="GO:0000977">
    <property type="term" value="F:RNA polymerase II transcription regulatory region sequence-specific DNA binding"/>
    <property type="evidence" value="ECO:0007669"/>
    <property type="project" value="InterPro"/>
</dbReference>
<dbReference type="GO" id="GO:0003697">
    <property type="term" value="F:single-stranded DNA binding"/>
    <property type="evidence" value="ECO:0000314"/>
    <property type="project" value="UniProtKB"/>
</dbReference>
<dbReference type="GO" id="GO:0046332">
    <property type="term" value="F:SMAD binding"/>
    <property type="evidence" value="ECO:0000314"/>
    <property type="project" value="MGI"/>
</dbReference>
<dbReference type="GO" id="GO:0140416">
    <property type="term" value="F:transcription regulator inhibitor activity"/>
    <property type="evidence" value="ECO:0000314"/>
    <property type="project" value="UniProtKB"/>
</dbReference>
<dbReference type="GO" id="GO:0008283">
    <property type="term" value="P:cell population proliferation"/>
    <property type="evidence" value="ECO:0000315"/>
    <property type="project" value="MGI"/>
</dbReference>
<dbReference type="GO" id="GO:0098963">
    <property type="term" value="P:dendritic transport of messenger ribonucleoprotein complex"/>
    <property type="evidence" value="ECO:0000314"/>
    <property type="project" value="SynGO"/>
</dbReference>
<dbReference type="GO" id="GO:0050673">
    <property type="term" value="P:epithelial cell proliferation"/>
    <property type="evidence" value="ECO:0000315"/>
    <property type="project" value="MGI"/>
</dbReference>
<dbReference type="GO" id="GO:0046651">
    <property type="term" value="P:lymphocyte proliferation"/>
    <property type="evidence" value="ECO:0000315"/>
    <property type="project" value="MGI"/>
</dbReference>
<dbReference type="GO" id="GO:0043433">
    <property type="term" value="P:negative regulation of DNA-binding transcription factor activity"/>
    <property type="evidence" value="ECO:0000314"/>
    <property type="project" value="UniProtKB"/>
</dbReference>
<dbReference type="GO" id="GO:0045892">
    <property type="term" value="P:negative regulation of DNA-templated transcription"/>
    <property type="evidence" value="ECO:0000314"/>
    <property type="project" value="MGI"/>
</dbReference>
<dbReference type="GO" id="GO:0000122">
    <property type="term" value="P:negative regulation of transcription by RNA polymerase II"/>
    <property type="evidence" value="ECO:0000314"/>
    <property type="project" value="HGNC-UCL"/>
</dbReference>
<dbReference type="GO" id="GO:0007399">
    <property type="term" value="P:nervous system development"/>
    <property type="evidence" value="ECO:0000315"/>
    <property type="project" value="MGI"/>
</dbReference>
<dbReference type="GO" id="GO:0008284">
    <property type="term" value="P:positive regulation of cell population proliferation"/>
    <property type="evidence" value="ECO:0000315"/>
    <property type="project" value="MGI"/>
</dbReference>
<dbReference type="FunFam" id="3.10.450.700:FF:000001">
    <property type="entry name" value="Purine-rich element binding protein A"/>
    <property type="match status" value="1"/>
</dbReference>
<dbReference type="FunFam" id="3.30.2450.30:FF:000001">
    <property type="entry name" value="Purine-rich element binding protein A"/>
    <property type="match status" value="1"/>
</dbReference>
<dbReference type="Gene3D" id="3.10.450.700">
    <property type="match status" value="1"/>
</dbReference>
<dbReference type="Gene3D" id="3.30.2450.30">
    <property type="match status" value="1"/>
</dbReference>
<dbReference type="InterPro" id="IPR006628">
    <property type="entry name" value="PUR-bd_fam"/>
</dbReference>
<dbReference type="PANTHER" id="PTHR12611">
    <property type="entry name" value="PUR-TRANSCRIPTIONAL ACTIVATOR"/>
    <property type="match status" value="1"/>
</dbReference>
<dbReference type="PANTHER" id="PTHR12611:SF2">
    <property type="entry name" value="TRANSCRIPTIONAL ACTIVATOR PROTEIN PUR-ALPHA"/>
    <property type="match status" value="1"/>
</dbReference>
<dbReference type="Pfam" id="PF04845">
    <property type="entry name" value="PurA"/>
    <property type="match status" value="1"/>
</dbReference>
<dbReference type="SMART" id="SM00712">
    <property type="entry name" value="PUR"/>
    <property type="match status" value="3"/>
</dbReference>
<sequence length="321" mass="34884">MADRDSGSEQGGAALGSGGSLGHPGSGSGSGGGGGGGGGGGGSGGGGGAPGGLQHETQELASKRVDIQNKRFYLDVKQNAKGRFLKIAEVGAGGNKSRLTLSMSVAVEFRDYLGDFIEHYAQLGPSQPPDLAQAQDEPRRALKSEFLVRENRKYYMDLKENQRGRFLRIRQTVNRGPGLGSTQGQTIALPAQGLIEFRDALAKLIDDYGVEEEPAELPEGTSLTVDNKRFFFDVGSNKYGVFMRVSEVKPTYRNSITVPYKVWAKFGHTFCKYSEEMKKIQEKQREKRAACEQLHQQQQQQQEETTAATLLLQGEEEGEED</sequence>
<protein>
    <recommendedName>
        <fullName>Transcriptional activator protein Pur-alpha</fullName>
    </recommendedName>
    <alternativeName>
        <fullName>Purine-rich single-stranded DNA-binding protein alpha</fullName>
    </alternativeName>
</protein>
<keyword id="KW-0007">Acetylation</keyword>
<keyword id="KW-0010">Activator</keyword>
<keyword id="KW-0903">Direct protein sequencing</keyword>
<keyword id="KW-0238">DNA-binding</keyword>
<keyword id="KW-0539">Nucleus</keyword>
<keyword id="KW-0597">Phosphoprotein</keyword>
<keyword id="KW-1185">Reference proteome</keyword>
<keyword id="KW-0804">Transcription</keyword>
<keyword id="KW-0805">Transcription regulation</keyword>